<sequence>MFLEAAAVMKPFIGTYENKVDRKGRVSVPAKFRAVLQAAEYTTIVVRPDRERGCIEGYGMDRLERLSEATPDLLDEGTQTPSLERIYDILSDSEELPFDPTGRVVVPADLLAQAGIGETAVFVGLGRVFQIWNPTALEASRGRKPRASASQGAGA</sequence>
<gene>
    <name evidence="1" type="primary">mraZ</name>
    <name type="ordered locus">Rru_A0959</name>
</gene>
<comment type="subunit">
    <text evidence="1">Forms oligomers.</text>
</comment>
<comment type="subcellular location">
    <subcellularLocation>
        <location evidence="1">Cytoplasm</location>
        <location evidence="1">Nucleoid</location>
    </subcellularLocation>
</comment>
<comment type="similarity">
    <text evidence="1">Belongs to the MraZ family.</text>
</comment>
<name>MRAZ_RHORT</name>
<protein>
    <recommendedName>
        <fullName>Transcriptional regulator MraZ</fullName>
    </recommendedName>
</protein>
<accession>Q2RVT5</accession>
<reference key="1">
    <citation type="journal article" date="2011" name="Stand. Genomic Sci.">
        <title>Complete genome sequence of Rhodospirillum rubrum type strain (S1).</title>
        <authorList>
            <person name="Munk A.C."/>
            <person name="Copeland A."/>
            <person name="Lucas S."/>
            <person name="Lapidus A."/>
            <person name="Del Rio T.G."/>
            <person name="Barry K."/>
            <person name="Detter J.C."/>
            <person name="Hammon N."/>
            <person name="Israni S."/>
            <person name="Pitluck S."/>
            <person name="Brettin T."/>
            <person name="Bruce D."/>
            <person name="Han C."/>
            <person name="Tapia R."/>
            <person name="Gilna P."/>
            <person name="Schmutz J."/>
            <person name="Larimer F."/>
            <person name="Land M."/>
            <person name="Kyrpides N.C."/>
            <person name="Mavromatis K."/>
            <person name="Richardson P."/>
            <person name="Rohde M."/>
            <person name="Goeker M."/>
            <person name="Klenk H.P."/>
            <person name="Zhang Y."/>
            <person name="Roberts G.P."/>
            <person name="Reslewic S."/>
            <person name="Schwartz D.C."/>
        </authorList>
    </citation>
    <scope>NUCLEOTIDE SEQUENCE [LARGE SCALE GENOMIC DNA]</scope>
    <source>
        <strain>ATCC 11170 / ATH 1.1.1 / DSM 467 / LMG 4362 / NCIMB 8255 / S1</strain>
    </source>
</reference>
<keyword id="KW-0963">Cytoplasm</keyword>
<keyword id="KW-0238">DNA-binding</keyword>
<keyword id="KW-1185">Reference proteome</keyword>
<keyword id="KW-0677">Repeat</keyword>
<keyword id="KW-0804">Transcription</keyword>
<keyword id="KW-0805">Transcription regulation</keyword>
<organism>
    <name type="scientific">Rhodospirillum rubrum (strain ATCC 11170 / ATH 1.1.1 / DSM 467 / LMG 4362 / NCIMB 8255 / S1)</name>
    <dbReference type="NCBI Taxonomy" id="269796"/>
    <lineage>
        <taxon>Bacteria</taxon>
        <taxon>Pseudomonadati</taxon>
        <taxon>Pseudomonadota</taxon>
        <taxon>Alphaproteobacteria</taxon>
        <taxon>Rhodospirillales</taxon>
        <taxon>Rhodospirillaceae</taxon>
        <taxon>Rhodospirillum</taxon>
    </lineage>
</organism>
<proteinExistence type="inferred from homology"/>
<evidence type="ECO:0000255" key="1">
    <source>
        <dbReference type="HAMAP-Rule" id="MF_01008"/>
    </source>
</evidence>
<evidence type="ECO:0000255" key="2">
    <source>
        <dbReference type="PROSITE-ProRule" id="PRU01076"/>
    </source>
</evidence>
<dbReference type="EMBL" id="CP000230">
    <property type="protein sequence ID" value="ABC21760.1"/>
    <property type="molecule type" value="Genomic_DNA"/>
</dbReference>
<dbReference type="RefSeq" id="WP_011388714.1">
    <property type="nucleotide sequence ID" value="NC_007643.1"/>
</dbReference>
<dbReference type="RefSeq" id="YP_426047.1">
    <property type="nucleotide sequence ID" value="NC_007643.1"/>
</dbReference>
<dbReference type="SMR" id="Q2RVT5"/>
<dbReference type="STRING" id="269796.Rru_A0959"/>
<dbReference type="EnsemblBacteria" id="ABC21760">
    <property type="protein sequence ID" value="ABC21760"/>
    <property type="gene ID" value="Rru_A0959"/>
</dbReference>
<dbReference type="KEGG" id="rru:Rru_A0959"/>
<dbReference type="PATRIC" id="fig|269796.9.peg.1015"/>
<dbReference type="eggNOG" id="COG2001">
    <property type="taxonomic scope" value="Bacteria"/>
</dbReference>
<dbReference type="HOGENOM" id="CLU_107907_1_0_5"/>
<dbReference type="PhylomeDB" id="Q2RVT5"/>
<dbReference type="Proteomes" id="UP000001929">
    <property type="component" value="Chromosome"/>
</dbReference>
<dbReference type="GO" id="GO:0005737">
    <property type="term" value="C:cytoplasm"/>
    <property type="evidence" value="ECO:0007669"/>
    <property type="project" value="UniProtKB-UniRule"/>
</dbReference>
<dbReference type="GO" id="GO:0009295">
    <property type="term" value="C:nucleoid"/>
    <property type="evidence" value="ECO:0007669"/>
    <property type="project" value="UniProtKB-SubCell"/>
</dbReference>
<dbReference type="GO" id="GO:0003700">
    <property type="term" value="F:DNA-binding transcription factor activity"/>
    <property type="evidence" value="ECO:0007669"/>
    <property type="project" value="UniProtKB-UniRule"/>
</dbReference>
<dbReference type="GO" id="GO:0000976">
    <property type="term" value="F:transcription cis-regulatory region binding"/>
    <property type="evidence" value="ECO:0007669"/>
    <property type="project" value="TreeGrafter"/>
</dbReference>
<dbReference type="GO" id="GO:2000143">
    <property type="term" value="P:negative regulation of DNA-templated transcription initiation"/>
    <property type="evidence" value="ECO:0007669"/>
    <property type="project" value="TreeGrafter"/>
</dbReference>
<dbReference type="CDD" id="cd16321">
    <property type="entry name" value="MraZ_C"/>
    <property type="match status" value="1"/>
</dbReference>
<dbReference type="CDD" id="cd16320">
    <property type="entry name" value="MraZ_N"/>
    <property type="match status" value="1"/>
</dbReference>
<dbReference type="Gene3D" id="3.40.1550.20">
    <property type="entry name" value="Transcriptional regulator MraZ domain"/>
    <property type="match status" value="1"/>
</dbReference>
<dbReference type="HAMAP" id="MF_01008">
    <property type="entry name" value="MraZ"/>
    <property type="match status" value="1"/>
</dbReference>
<dbReference type="InterPro" id="IPR003444">
    <property type="entry name" value="MraZ"/>
</dbReference>
<dbReference type="InterPro" id="IPR035644">
    <property type="entry name" value="MraZ_C"/>
</dbReference>
<dbReference type="InterPro" id="IPR020603">
    <property type="entry name" value="MraZ_dom"/>
</dbReference>
<dbReference type="InterPro" id="IPR035642">
    <property type="entry name" value="MraZ_N"/>
</dbReference>
<dbReference type="InterPro" id="IPR038619">
    <property type="entry name" value="MraZ_sf"/>
</dbReference>
<dbReference type="InterPro" id="IPR007159">
    <property type="entry name" value="SpoVT-AbrB_dom"/>
</dbReference>
<dbReference type="InterPro" id="IPR037914">
    <property type="entry name" value="SpoVT-AbrB_sf"/>
</dbReference>
<dbReference type="PANTHER" id="PTHR34701">
    <property type="entry name" value="TRANSCRIPTIONAL REGULATOR MRAZ"/>
    <property type="match status" value="1"/>
</dbReference>
<dbReference type="PANTHER" id="PTHR34701:SF1">
    <property type="entry name" value="TRANSCRIPTIONAL REGULATOR MRAZ"/>
    <property type="match status" value="1"/>
</dbReference>
<dbReference type="Pfam" id="PF02381">
    <property type="entry name" value="MraZ"/>
    <property type="match status" value="2"/>
</dbReference>
<dbReference type="SUPFAM" id="SSF89447">
    <property type="entry name" value="AbrB/MazE/MraZ-like"/>
    <property type="match status" value="1"/>
</dbReference>
<dbReference type="PROSITE" id="PS51740">
    <property type="entry name" value="SPOVT_ABRB"/>
    <property type="match status" value="2"/>
</dbReference>
<feature type="chain" id="PRO_0000230106" description="Transcriptional regulator MraZ">
    <location>
        <begin position="1"/>
        <end position="155"/>
    </location>
</feature>
<feature type="domain" description="SpoVT-AbrB 1" evidence="2">
    <location>
        <begin position="15"/>
        <end position="62"/>
    </location>
</feature>
<feature type="domain" description="SpoVT-AbrB 2" evidence="2">
    <location>
        <begin position="93"/>
        <end position="136"/>
    </location>
</feature>